<organism>
    <name type="scientific">Methylorubrum extorquens (strain ATCC 14718 / DSM 1338 / JCM 2805 / NCIMB 9133 / AM1)</name>
    <name type="common">Methylobacterium extorquens</name>
    <dbReference type="NCBI Taxonomy" id="272630"/>
    <lineage>
        <taxon>Bacteria</taxon>
        <taxon>Pseudomonadati</taxon>
        <taxon>Pseudomonadota</taxon>
        <taxon>Alphaproteobacteria</taxon>
        <taxon>Hyphomicrobiales</taxon>
        <taxon>Methylobacteriaceae</taxon>
        <taxon>Methylorubrum</taxon>
    </lineage>
</organism>
<proteinExistence type="evidence at protein level"/>
<dbReference type="EC" id="5.4.99.63" evidence="4"/>
<dbReference type="EMBL" id="U28335">
    <property type="protein sequence ID" value="AAC44087.1"/>
    <property type="molecule type" value="Genomic_DNA"/>
</dbReference>
<dbReference type="EMBL" id="CP001510">
    <property type="protein sequence ID" value="ACS38142.1"/>
    <property type="molecule type" value="Genomic_DNA"/>
</dbReference>
<dbReference type="RefSeq" id="WP_003597279.1">
    <property type="nucleotide sequence ID" value="NC_012808.1"/>
</dbReference>
<dbReference type="SMR" id="Q49115"/>
<dbReference type="STRING" id="272630.MexAM1_META1p0180"/>
<dbReference type="KEGG" id="mea:Mex_1p0180"/>
<dbReference type="eggNOG" id="COG1884">
    <property type="taxonomic scope" value="Bacteria"/>
</dbReference>
<dbReference type="eggNOG" id="COG2185">
    <property type="taxonomic scope" value="Bacteria"/>
</dbReference>
<dbReference type="HOGENOM" id="CLU_009523_4_0_5"/>
<dbReference type="OrthoDB" id="9762378at2"/>
<dbReference type="Proteomes" id="UP000009081">
    <property type="component" value="Chromosome"/>
</dbReference>
<dbReference type="GO" id="GO:0031419">
    <property type="term" value="F:cobalamin binding"/>
    <property type="evidence" value="ECO:0007669"/>
    <property type="project" value="UniProtKB-KW"/>
</dbReference>
<dbReference type="GO" id="GO:0046872">
    <property type="term" value="F:metal ion binding"/>
    <property type="evidence" value="ECO:0007669"/>
    <property type="project" value="UniProtKB-KW"/>
</dbReference>
<dbReference type="GO" id="GO:0004494">
    <property type="term" value="F:methylmalonyl-CoA mutase activity"/>
    <property type="evidence" value="ECO:0007669"/>
    <property type="project" value="InterPro"/>
</dbReference>
<dbReference type="CDD" id="cd02071">
    <property type="entry name" value="MM_CoA_mut_B12_BD"/>
    <property type="match status" value="1"/>
</dbReference>
<dbReference type="Gene3D" id="3.40.50.280">
    <property type="entry name" value="Cobalamin-binding domain"/>
    <property type="match status" value="1"/>
</dbReference>
<dbReference type="Gene3D" id="3.20.20.240">
    <property type="entry name" value="Methylmalonyl-CoA mutase"/>
    <property type="match status" value="1"/>
</dbReference>
<dbReference type="InterPro" id="IPR006159">
    <property type="entry name" value="Acid_CoA_mut_C"/>
</dbReference>
<dbReference type="InterPro" id="IPR016176">
    <property type="entry name" value="Cbl-dep_enz_cat"/>
</dbReference>
<dbReference type="InterPro" id="IPR006158">
    <property type="entry name" value="Cobalamin-bd"/>
</dbReference>
<dbReference type="InterPro" id="IPR036724">
    <property type="entry name" value="Cobalamin-bd_sf"/>
</dbReference>
<dbReference type="InterPro" id="IPR006099">
    <property type="entry name" value="MeMalonylCoA_mutase_a/b_cat"/>
</dbReference>
<dbReference type="InterPro" id="IPR006098">
    <property type="entry name" value="MMCoA_mutase_a_cat"/>
</dbReference>
<dbReference type="NCBIfam" id="TIGR00640">
    <property type="entry name" value="acid_CoA_mut_C"/>
    <property type="match status" value="1"/>
</dbReference>
<dbReference type="NCBIfam" id="TIGR00641">
    <property type="entry name" value="acid_CoA_mut_N"/>
    <property type="match status" value="1"/>
</dbReference>
<dbReference type="PANTHER" id="PTHR48101:SF3">
    <property type="entry name" value="COENZYME B12-DEPENDENT MUTASE"/>
    <property type="match status" value="1"/>
</dbReference>
<dbReference type="PANTHER" id="PTHR48101">
    <property type="entry name" value="METHYLMALONYL-COA MUTASE, MITOCHONDRIAL-RELATED"/>
    <property type="match status" value="1"/>
</dbReference>
<dbReference type="Pfam" id="PF02310">
    <property type="entry name" value="B12-binding"/>
    <property type="match status" value="1"/>
</dbReference>
<dbReference type="Pfam" id="PF01642">
    <property type="entry name" value="MM_CoA_mutase"/>
    <property type="match status" value="1"/>
</dbReference>
<dbReference type="SUPFAM" id="SSF52242">
    <property type="entry name" value="Cobalamin (vitamin B12)-binding domain"/>
    <property type="match status" value="1"/>
</dbReference>
<dbReference type="SUPFAM" id="SSF51703">
    <property type="entry name" value="Cobalamin (vitamin B12)-dependent enzymes"/>
    <property type="match status" value="1"/>
</dbReference>
<dbReference type="PROSITE" id="PS51332">
    <property type="entry name" value="B12_BINDING"/>
    <property type="match status" value="1"/>
</dbReference>
<feature type="chain" id="PRO_0000194276" description="Ethylmalonyl-CoA mutase">
    <location>
        <begin position="1"/>
        <end position="688"/>
    </location>
</feature>
<feature type="domain" description="B12-binding" evidence="2">
    <location>
        <begin position="530"/>
        <end position="659"/>
    </location>
</feature>
<feature type="region of interest" description="Disordered" evidence="3">
    <location>
        <begin position="666"/>
        <end position="688"/>
    </location>
</feature>
<feature type="binding site" description="axial binding residue" evidence="1">
    <location>
        <position position="543"/>
    </location>
    <ligand>
        <name>adenosylcob(III)alamin</name>
        <dbReference type="ChEBI" id="CHEBI:18408"/>
    </ligand>
    <ligandPart>
        <name>Co</name>
        <dbReference type="ChEBI" id="CHEBI:27638"/>
    </ligandPart>
</feature>
<accession>Q49115</accession>
<accession>C5AP83</accession>
<protein>
    <recommendedName>
        <fullName evidence="7">Ethylmalonyl-CoA mutase</fullName>
        <ecNumber evidence="4">5.4.99.63</ecNumber>
    </recommendedName>
</protein>
<evidence type="ECO:0000250" key="1">
    <source>
        <dbReference type="UniProtKB" id="P11653"/>
    </source>
</evidence>
<evidence type="ECO:0000255" key="2">
    <source>
        <dbReference type="PROSITE-ProRule" id="PRU00666"/>
    </source>
</evidence>
<evidence type="ECO:0000256" key="3">
    <source>
        <dbReference type="SAM" id="MobiDB-lite"/>
    </source>
</evidence>
<evidence type="ECO:0000269" key="4">
    <source>
    </source>
</evidence>
<evidence type="ECO:0000269" key="5">
    <source>
    </source>
</evidence>
<evidence type="ECO:0000269" key="6">
    <source>
    </source>
</evidence>
<evidence type="ECO:0000303" key="7">
    <source>
    </source>
</evidence>
<evidence type="ECO:0000303" key="8">
    <source>
    </source>
</evidence>
<evidence type="ECO:0000305" key="9"/>
<evidence type="ECO:0000305" key="10">
    <source>
    </source>
</evidence>
<comment type="function">
    <text evidence="4 5 6">Radical enzyme that catalyzes the transformation of (2R)-ethylmalonyl-CoA to (2S)-methylsuccinyl-CoA (PubMed:25448820). Is involved in the ethylmalonyl-CoA pathway for acetyl-CoA assimilation required for M.extorquens growth on one- and two-carbon compounds such as ethylamine, methanol or ethanol as sole carbon source (PubMed:25448820, PubMed:8704985, PubMed:8868443). This enzyme acts as a regulatory metabolic control point in this pathway, that allows M.extorquens to efficiently restore metabolic balance when challenged with a sudden change in the growth substrate (PubMed:25448820).</text>
</comment>
<comment type="catalytic activity">
    <reaction evidence="4">
        <text>(2R)-ethylmalonyl-CoA = (2S)-methylsuccinyl-CoA</text>
        <dbReference type="Rhea" id="RHEA:45576"/>
        <dbReference type="ChEBI" id="CHEBI:84866"/>
        <dbReference type="ChEBI" id="CHEBI:85316"/>
        <dbReference type="EC" id="5.4.99.63"/>
    </reaction>
    <physiologicalReaction direction="left-to-right" evidence="10">
        <dbReference type="Rhea" id="RHEA:45577"/>
    </physiologicalReaction>
</comment>
<comment type="cofactor">
    <cofactor evidence="4">
        <name>adenosylcob(III)alamin</name>
        <dbReference type="ChEBI" id="CHEBI:18408"/>
    </cofactor>
</comment>
<comment type="induction">
    <text evidence="4">Up-regulated during growth on ethylamine.</text>
</comment>
<comment type="disruption phenotype">
    <text evidence="5">Cells lacking this gene lose the ability to grow on C1 (methanol and methylamine) and C2 (ethanol and ethylamine) compounds, and also on beta-hydroxybutyrate, but they grow normally on pyruvate. Growth on C1 and C2 compounds is restored by addition of glyoxylate or glycolate, indicating that these mutants are unable to convert acetyl-CoA into glyoxylate.</text>
</comment>
<comment type="similarity">
    <text evidence="9">Belongs to the methylmalonyl-CoA mutase family.</text>
</comment>
<keyword id="KW-0846">Cobalamin</keyword>
<keyword id="KW-0170">Cobalt</keyword>
<keyword id="KW-0413">Isomerase</keyword>
<keyword id="KW-0479">Metal-binding</keyword>
<keyword id="KW-1185">Reference proteome</keyword>
<name>ECM_METEA</name>
<sequence length="688" mass="75066">MSAQASVAEVKRDKPWIIRTYAGHSTAAESNKLYRGNLAKGQTGLSVAFDLPTQTGYDPDHELARGEVGKVGVSIAHLGDMRALFDQIPLAQMNTSMTINATAPWLLSLYLAVAEEQGAPLAALQGTTQNDIIKEYLSRGTYVFPPAPSLRLTKDVILFTTKNVPKWNPMNVCSYHLQEAGATPVQELSYALAIAIAVLDTVRDDPDFDEASFSDVFSRISFFVNAGMRFVTEICKMRAFAELWDEIAQERYGITDAKKRIFRYGVQVNSLGLTEQQPENNVHRILIEMLAVTLSKRARARAVQLPAWNEALGLPRPWDQQWSMRMQQILAFETDLLEYDDIFDGSTVIEARVEALKEQTRAELTRIAEIGGAVTAVEAGELKRALVESNARRISAIEKGEQIVVGVNKWQQGEPSPLTAGDGAIFTVSETVEMEAETRIREWRSKRDERAVGQALADLEQAARSGANIMPPSIAAAKAGVTTGEWGQRLREVFGEYRAPTGVTLQTVTSGAAEDARLLIADLGERLGETPRLVVGKPGLDGHSNGAEQIALRARDVGFDVTYDGIRQTPTEIVAKAKERGAHVIGLSVLSGSHVPLVREVKAKLREAGLDHVPVVVGGIISTEDELVLKNMGVTAVYTPKDYELDKIMVGLAKVVERALDKRAADRADTEAGVPGAPKRNESGAQVF</sequence>
<gene>
    <name evidence="7" type="primary">ecm</name>
    <name evidence="8" type="synonym">meaA</name>
    <name type="ordered locus">MexAM1_META1p0180</name>
</gene>
<reference key="1">
    <citation type="journal article" date="1996" name="Microbiology">
        <title>A protein having similarity with methylmalonyl-CoA mutase is required for the assimilation of methanol and ethanol by Methylobacterium extorquens AM1.</title>
        <authorList>
            <person name="Smith L.M."/>
            <person name="Meijer W.G."/>
            <person name="Dijkhuizen L."/>
            <person name="Goodwin P.M."/>
        </authorList>
    </citation>
    <scope>NUCLEOTIDE SEQUENCE [GENOMIC DNA]</scope>
    <scope>FUNCTION</scope>
    <source>
        <strain>ATCC 14718 / DSM 1338 / JCM 2805 / NCIMB 9133 / AM1</strain>
    </source>
</reference>
<reference key="2">
    <citation type="journal article" date="2009" name="PLoS ONE">
        <title>Methylobacterium genome sequences: a reference blueprint to investigate microbial metabolism of C1 compounds from natural and industrial sources.</title>
        <authorList>
            <person name="Vuilleumier S."/>
            <person name="Chistoserdova L."/>
            <person name="Lee M.-C."/>
            <person name="Bringel F."/>
            <person name="Lajus A."/>
            <person name="Zhou Y."/>
            <person name="Gourion B."/>
            <person name="Barbe V."/>
            <person name="Chang J."/>
            <person name="Cruveiller S."/>
            <person name="Dossat C."/>
            <person name="Gillett W."/>
            <person name="Gruffaz C."/>
            <person name="Haugen E."/>
            <person name="Hourcade E."/>
            <person name="Levy R."/>
            <person name="Mangenot S."/>
            <person name="Muller E."/>
            <person name="Nadalig T."/>
            <person name="Pagni M."/>
            <person name="Penny C."/>
            <person name="Peyraud R."/>
            <person name="Robinson D.G."/>
            <person name="Roche D."/>
            <person name="Rouy Z."/>
            <person name="Saenampechek C."/>
            <person name="Salvignol G."/>
            <person name="Vallenet D."/>
            <person name="Wu Z."/>
            <person name="Marx C.J."/>
            <person name="Vorholt J.A."/>
            <person name="Olson M.V."/>
            <person name="Kaul R."/>
            <person name="Weissenbach J."/>
            <person name="Medigue C."/>
            <person name="Lidstrom M.E."/>
        </authorList>
    </citation>
    <scope>NUCLEOTIDE SEQUENCE [LARGE SCALE GENOMIC DNA]</scope>
    <source>
        <strain>ATCC 14718 / DSM 1338 / JCM 2805 / NCIMB 9133 / AM1</strain>
    </source>
</reference>
<reference key="3">
    <citation type="journal article" date="1996" name="Microbiology">
        <title>Molecular characterization of a chromosomal region involved in the oxidation of acetyl-CoA to glyoxylate in the isocitrate-lyase-negative methylotroph Methylobacterium extorquens AM1.</title>
        <authorList>
            <person name="Chistoserdova L.V."/>
            <person name="Lidstrom M.E."/>
        </authorList>
    </citation>
    <scope>FUNCTION</scope>
    <scope>DISRUPTION PHENOTYPE</scope>
    <source>
        <strain>ATCC 14718 / DSM 1338 / JCM 2805 / NCIMB 9133 / AM1</strain>
    </source>
</reference>
<reference key="4">
    <citation type="journal article" date="2015" name="J. Bacteriol.">
        <title>Ethylmalonyl coenzyme A mutase operates as a metabolic control point in Methylobacterium extorquens AM1.</title>
        <authorList>
            <person name="Good N.M."/>
            <person name="Martinez-Gomez N.C."/>
            <person name="Beck D.A."/>
            <person name="Lidstrom M.E."/>
        </authorList>
    </citation>
    <scope>FUNCTION</scope>
    <scope>CATALYTIC ACTIVITY</scope>
    <scope>COFACTOR</scope>
    <scope>INDUCTION</scope>
    <source>
        <strain>ATCC 14718 / DSM 1338 / JCM 2805 / NCIMB 9133 / AM1</strain>
    </source>
</reference>